<accession>Q8K947</accession>
<organism>
    <name type="scientific">Buchnera aphidicola subsp. Schizaphis graminum (strain Sg)</name>
    <dbReference type="NCBI Taxonomy" id="198804"/>
    <lineage>
        <taxon>Bacteria</taxon>
        <taxon>Pseudomonadati</taxon>
        <taxon>Pseudomonadota</taxon>
        <taxon>Gammaproteobacteria</taxon>
        <taxon>Enterobacterales</taxon>
        <taxon>Erwiniaceae</taxon>
        <taxon>Buchnera</taxon>
    </lineage>
</organism>
<protein>
    <recommendedName>
        <fullName evidence="2">Small ribosomal subunit protein uS12</fullName>
    </recommendedName>
    <alternativeName>
        <fullName evidence="3">30S ribosomal protein S12</fullName>
    </alternativeName>
</protein>
<gene>
    <name evidence="2" type="primary">rpsL</name>
    <name type="ordered locus">BUsg_510</name>
</gene>
<reference key="1">
    <citation type="journal article" date="2002" name="Science">
        <title>50 million years of genomic stasis in endosymbiotic bacteria.</title>
        <authorList>
            <person name="Tamas I."/>
            <person name="Klasson L."/>
            <person name="Canbaeck B."/>
            <person name="Naeslund A.K."/>
            <person name="Eriksson A.-S."/>
            <person name="Wernegreen J.J."/>
            <person name="Sandstroem J.P."/>
            <person name="Moran N.A."/>
            <person name="Andersson S.G.E."/>
        </authorList>
    </citation>
    <scope>NUCLEOTIDE SEQUENCE [LARGE SCALE GENOMIC DNA]</scope>
    <source>
        <strain>Sg</strain>
    </source>
</reference>
<keyword id="KW-0488">Methylation</keyword>
<keyword id="KW-0687">Ribonucleoprotein</keyword>
<keyword id="KW-0689">Ribosomal protein</keyword>
<keyword id="KW-0694">RNA-binding</keyword>
<keyword id="KW-0699">rRNA-binding</keyword>
<keyword id="KW-0820">tRNA-binding</keyword>
<sequence length="124" mass="13775">MATVNQLVRKPRLRKIVKTNVPALEGSPQKRGVCTRVYTTTPKKPNSALRKVCRVRLTNGFEVTAYIGGEGHNLQEHSVILIRGGRVKDLPGVRYHIVRGSLDCAGVKERKKGRSKYGVKKAKV</sequence>
<name>RS12_BUCAP</name>
<proteinExistence type="inferred from homology"/>
<feature type="chain" id="PRO_0000146193" description="Small ribosomal subunit protein uS12">
    <location>
        <begin position="1"/>
        <end position="124"/>
    </location>
</feature>
<feature type="modified residue" description="3-methylthioaspartic acid" evidence="1">
    <location>
        <position position="89"/>
    </location>
</feature>
<evidence type="ECO:0000250" key="1"/>
<evidence type="ECO:0000255" key="2">
    <source>
        <dbReference type="HAMAP-Rule" id="MF_00403"/>
    </source>
</evidence>
<evidence type="ECO:0000305" key="3"/>
<comment type="function">
    <text evidence="2">With S4 and S5 plays an important role in translational accuracy.</text>
</comment>
<comment type="function">
    <text evidence="2">Interacts with and stabilizes bases of the 16S rRNA that are involved in tRNA selection in the A site and with the mRNA backbone. Located at the interface of the 30S and 50S subunits, it traverses the body of the 30S subunit contacting proteins on the other side and probably holding the rRNA structure together. The combined cluster of proteins S8, S12 and S17 appears to hold together the shoulder and platform of the 30S subunit.</text>
</comment>
<comment type="subunit">
    <text evidence="2">Part of the 30S ribosomal subunit. Contacts proteins S8 and S17. May interact with IF1 in the 30S initiation complex.</text>
</comment>
<comment type="similarity">
    <text evidence="2">Belongs to the universal ribosomal protein uS12 family.</text>
</comment>
<dbReference type="EMBL" id="AE013218">
    <property type="protein sequence ID" value="AAM68053.1"/>
    <property type="molecule type" value="Genomic_DNA"/>
</dbReference>
<dbReference type="RefSeq" id="WP_011054019.1">
    <property type="nucleotide sequence ID" value="NC_004061.1"/>
</dbReference>
<dbReference type="SMR" id="Q8K947"/>
<dbReference type="STRING" id="198804.BUsg_510"/>
<dbReference type="GeneID" id="93003985"/>
<dbReference type="KEGG" id="bas:BUsg_510"/>
<dbReference type="eggNOG" id="COG0048">
    <property type="taxonomic scope" value="Bacteria"/>
</dbReference>
<dbReference type="HOGENOM" id="CLU_104295_1_2_6"/>
<dbReference type="Proteomes" id="UP000000416">
    <property type="component" value="Chromosome"/>
</dbReference>
<dbReference type="GO" id="GO:0015935">
    <property type="term" value="C:small ribosomal subunit"/>
    <property type="evidence" value="ECO:0007669"/>
    <property type="project" value="InterPro"/>
</dbReference>
<dbReference type="GO" id="GO:0019843">
    <property type="term" value="F:rRNA binding"/>
    <property type="evidence" value="ECO:0007669"/>
    <property type="project" value="UniProtKB-UniRule"/>
</dbReference>
<dbReference type="GO" id="GO:0003735">
    <property type="term" value="F:structural constituent of ribosome"/>
    <property type="evidence" value="ECO:0007669"/>
    <property type="project" value="InterPro"/>
</dbReference>
<dbReference type="GO" id="GO:0000049">
    <property type="term" value="F:tRNA binding"/>
    <property type="evidence" value="ECO:0007669"/>
    <property type="project" value="UniProtKB-UniRule"/>
</dbReference>
<dbReference type="GO" id="GO:0006412">
    <property type="term" value="P:translation"/>
    <property type="evidence" value="ECO:0007669"/>
    <property type="project" value="UniProtKB-UniRule"/>
</dbReference>
<dbReference type="CDD" id="cd03368">
    <property type="entry name" value="Ribosomal_S12"/>
    <property type="match status" value="1"/>
</dbReference>
<dbReference type="FunFam" id="2.40.50.140:FF:000001">
    <property type="entry name" value="30S ribosomal protein S12"/>
    <property type="match status" value="1"/>
</dbReference>
<dbReference type="Gene3D" id="2.40.50.140">
    <property type="entry name" value="Nucleic acid-binding proteins"/>
    <property type="match status" value="1"/>
</dbReference>
<dbReference type="HAMAP" id="MF_00403_B">
    <property type="entry name" value="Ribosomal_uS12_B"/>
    <property type="match status" value="1"/>
</dbReference>
<dbReference type="InterPro" id="IPR012340">
    <property type="entry name" value="NA-bd_OB-fold"/>
</dbReference>
<dbReference type="InterPro" id="IPR006032">
    <property type="entry name" value="Ribosomal_uS12"/>
</dbReference>
<dbReference type="InterPro" id="IPR005679">
    <property type="entry name" value="Ribosomal_uS12_bac"/>
</dbReference>
<dbReference type="NCBIfam" id="TIGR00981">
    <property type="entry name" value="rpsL_bact"/>
    <property type="match status" value="1"/>
</dbReference>
<dbReference type="PANTHER" id="PTHR11652">
    <property type="entry name" value="30S RIBOSOMAL PROTEIN S12 FAMILY MEMBER"/>
    <property type="match status" value="1"/>
</dbReference>
<dbReference type="Pfam" id="PF00164">
    <property type="entry name" value="Ribosom_S12_S23"/>
    <property type="match status" value="1"/>
</dbReference>
<dbReference type="PIRSF" id="PIRSF002133">
    <property type="entry name" value="Ribosomal_S12/S23"/>
    <property type="match status" value="1"/>
</dbReference>
<dbReference type="PRINTS" id="PR01034">
    <property type="entry name" value="RIBOSOMALS12"/>
</dbReference>
<dbReference type="SUPFAM" id="SSF50249">
    <property type="entry name" value="Nucleic acid-binding proteins"/>
    <property type="match status" value="1"/>
</dbReference>
<dbReference type="PROSITE" id="PS00055">
    <property type="entry name" value="RIBOSOMAL_S12"/>
    <property type="match status" value="1"/>
</dbReference>